<evidence type="ECO:0000255" key="1">
    <source>
        <dbReference type="HAMAP-Rule" id="MF_00686"/>
    </source>
</evidence>
<proteinExistence type="inferred from homology"/>
<organism>
    <name type="scientific">Histophilus somni (strain 2336)</name>
    <name type="common">Haemophilus somnus</name>
    <dbReference type="NCBI Taxonomy" id="228400"/>
    <lineage>
        <taxon>Bacteria</taxon>
        <taxon>Pseudomonadati</taxon>
        <taxon>Pseudomonadota</taxon>
        <taxon>Gammaproteobacteria</taxon>
        <taxon>Pasteurellales</taxon>
        <taxon>Pasteurellaceae</taxon>
        <taxon>Histophilus</taxon>
    </lineage>
</organism>
<accession>B0UWE5</accession>
<comment type="function">
    <text evidence="1">Could be a mediator in iron transactions between iron acquisition and iron-requiring processes, such as synthesis and/or repair of Fe-S clusters in biosynthetic enzymes.</text>
</comment>
<comment type="similarity">
    <text evidence="1">Belongs to the Fe(2+)-trafficking protein family.</text>
</comment>
<keyword id="KW-0408">Iron</keyword>
<gene>
    <name type="ordered locus">HSM_1830</name>
</gene>
<feature type="chain" id="PRO_1000083077" description="Probable Fe(2+)-trafficking protein">
    <location>
        <begin position="1"/>
        <end position="91"/>
    </location>
</feature>
<sequence>MARNVFCTYLNQEAEGLDFQLYPGELGKRIFDNISKQAWAEWMKKQTMLVNEKKLNMMNSEHRQLLEQEMTNFLFEGKDVHIEGYVPPTEK</sequence>
<reference key="1">
    <citation type="submission" date="2008-02" db="EMBL/GenBank/DDBJ databases">
        <title>Complete sequence of Haemophilus somnus 2336.</title>
        <authorList>
            <consortium name="US DOE Joint Genome Institute"/>
            <person name="Siddaramappa S."/>
            <person name="Duncan A.J."/>
            <person name="Challacombe J.F."/>
            <person name="Rainey D."/>
            <person name="Gillaspy A.F."/>
            <person name="Carson M."/>
            <person name="Gipson J."/>
            <person name="Gipson M."/>
            <person name="Bruce D."/>
            <person name="Detter J.C."/>
            <person name="Han C.S."/>
            <person name="Land M."/>
            <person name="Tapia R."/>
            <person name="Thompson L.S."/>
            <person name="Orvis J."/>
            <person name="Zaitshik J."/>
            <person name="Barnes G."/>
            <person name="Brettin T.S."/>
            <person name="Dyer D.W."/>
            <person name="Inzana T.J."/>
        </authorList>
    </citation>
    <scope>NUCLEOTIDE SEQUENCE [LARGE SCALE GENOMIC DNA]</scope>
    <source>
        <strain>2336</strain>
    </source>
</reference>
<protein>
    <recommendedName>
        <fullName evidence="1">Probable Fe(2+)-trafficking protein</fullName>
    </recommendedName>
</protein>
<dbReference type="EMBL" id="CP000947">
    <property type="protein sequence ID" value="ACA31617.1"/>
    <property type="molecule type" value="Genomic_DNA"/>
</dbReference>
<dbReference type="RefSeq" id="WP_011609813.1">
    <property type="nucleotide sequence ID" value="NC_010519.1"/>
</dbReference>
<dbReference type="SMR" id="B0UWE5"/>
<dbReference type="STRING" id="228400.HSM_1830"/>
<dbReference type="GeneID" id="31488137"/>
<dbReference type="KEGG" id="hsm:HSM_1830"/>
<dbReference type="HOGENOM" id="CLU_170994_0_0_6"/>
<dbReference type="GO" id="GO:0005829">
    <property type="term" value="C:cytosol"/>
    <property type="evidence" value="ECO:0007669"/>
    <property type="project" value="TreeGrafter"/>
</dbReference>
<dbReference type="GO" id="GO:0005506">
    <property type="term" value="F:iron ion binding"/>
    <property type="evidence" value="ECO:0007669"/>
    <property type="project" value="UniProtKB-UniRule"/>
</dbReference>
<dbReference type="GO" id="GO:0034599">
    <property type="term" value="P:cellular response to oxidative stress"/>
    <property type="evidence" value="ECO:0007669"/>
    <property type="project" value="TreeGrafter"/>
</dbReference>
<dbReference type="FunFam" id="1.10.3880.10:FF:000001">
    <property type="entry name" value="Probable Fe(2+)-trafficking protein"/>
    <property type="match status" value="1"/>
</dbReference>
<dbReference type="Gene3D" id="1.10.3880.10">
    <property type="entry name" value="Fe(II) trafficking protein YggX"/>
    <property type="match status" value="1"/>
</dbReference>
<dbReference type="HAMAP" id="MF_00686">
    <property type="entry name" value="Fe_traffic_YggX"/>
    <property type="match status" value="1"/>
</dbReference>
<dbReference type="InterPro" id="IPR007457">
    <property type="entry name" value="Fe_traffick_prot_YggX"/>
</dbReference>
<dbReference type="InterPro" id="IPR036766">
    <property type="entry name" value="Fe_traffick_prot_YggX_sf"/>
</dbReference>
<dbReference type="NCBIfam" id="NF003817">
    <property type="entry name" value="PRK05408.1"/>
    <property type="match status" value="1"/>
</dbReference>
<dbReference type="PANTHER" id="PTHR36965">
    <property type="entry name" value="FE(2+)-TRAFFICKING PROTEIN-RELATED"/>
    <property type="match status" value="1"/>
</dbReference>
<dbReference type="PANTHER" id="PTHR36965:SF1">
    <property type="entry name" value="FE(2+)-TRAFFICKING PROTEIN-RELATED"/>
    <property type="match status" value="1"/>
</dbReference>
<dbReference type="Pfam" id="PF04362">
    <property type="entry name" value="Iron_traffic"/>
    <property type="match status" value="1"/>
</dbReference>
<dbReference type="PIRSF" id="PIRSF029827">
    <property type="entry name" value="Fe_traffic_YggX"/>
    <property type="match status" value="1"/>
</dbReference>
<dbReference type="SUPFAM" id="SSF111148">
    <property type="entry name" value="YggX-like"/>
    <property type="match status" value="1"/>
</dbReference>
<name>FETP_HISS2</name>